<gene>
    <name evidence="3" type="primary">Atp5if1</name>
    <name type="synonym">Atpi</name>
    <name evidence="8" type="synonym">Atpif1</name>
    <name type="synonym">If1</name>
</gene>
<reference key="1">
    <citation type="journal article" date="1997" name="Immunology">
        <title>Differential display analysis of murine collagen-induced arthritis: cloning of the cDNA-encoding murine ATPase inhibitor.</title>
        <authorList>
            <person name="Yamada E."/>
            <person name="Ishiguro N."/>
            <person name="Miyaishi O."/>
            <person name="Takeuchi A."/>
            <person name="Nakashima I."/>
            <person name="Iwata H."/>
            <person name="Isobe K."/>
        </authorList>
    </citation>
    <scope>NUCLEOTIDE SEQUENCE [MRNA]</scope>
    <source>
        <strain>DBA/1</strain>
    </source>
</reference>
<reference key="2">
    <citation type="journal article" date="2005" name="Science">
        <title>The transcriptional landscape of the mammalian genome.</title>
        <authorList>
            <person name="Carninci P."/>
            <person name="Kasukawa T."/>
            <person name="Katayama S."/>
            <person name="Gough J."/>
            <person name="Frith M.C."/>
            <person name="Maeda N."/>
            <person name="Oyama R."/>
            <person name="Ravasi T."/>
            <person name="Lenhard B."/>
            <person name="Wells C."/>
            <person name="Kodzius R."/>
            <person name="Shimokawa K."/>
            <person name="Bajic V.B."/>
            <person name="Brenner S.E."/>
            <person name="Batalov S."/>
            <person name="Forrest A.R."/>
            <person name="Zavolan M."/>
            <person name="Davis M.J."/>
            <person name="Wilming L.G."/>
            <person name="Aidinis V."/>
            <person name="Allen J.E."/>
            <person name="Ambesi-Impiombato A."/>
            <person name="Apweiler R."/>
            <person name="Aturaliya R.N."/>
            <person name="Bailey T.L."/>
            <person name="Bansal M."/>
            <person name="Baxter L."/>
            <person name="Beisel K.W."/>
            <person name="Bersano T."/>
            <person name="Bono H."/>
            <person name="Chalk A.M."/>
            <person name="Chiu K.P."/>
            <person name="Choudhary V."/>
            <person name="Christoffels A."/>
            <person name="Clutterbuck D.R."/>
            <person name="Crowe M.L."/>
            <person name="Dalla E."/>
            <person name="Dalrymple B.P."/>
            <person name="de Bono B."/>
            <person name="Della Gatta G."/>
            <person name="di Bernardo D."/>
            <person name="Down T."/>
            <person name="Engstrom P."/>
            <person name="Fagiolini M."/>
            <person name="Faulkner G."/>
            <person name="Fletcher C.F."/>
            <person name="Fukushima T."/>
            <person name="Furuno M."/>
            <person name="Futaki S."/>
            <person name="Gariboldi M."/>
            <person name="Georgii-Hemming P."/>
            <person name="Gingeras T.R."/>
            <person name="Gojobori T."/>
            <person name="Green R.E."/>
            <person name="Gustincich S."/>
            <person name="Harbers M."/>
            <person name="Hayashi Y."/>
            <person name="Hensch T.K."/>
            <person name="Hirokawa N."/>
            <person name="Hill D."/>
            <person name="Huminiecki L."/>
            <person name="Iacono M."/>
            <person name="Ikeo K."/>
            <person name="Iwama A."/>
            <person name="Ishikawa T."/>
            <person name="Jakt M."/>
            <person name="Kanapin A."/>
            <person name="Katoh M."/>
            <person name="Kawasawa Y."/>
            <person name="Kelso J."/>
            <person name="Kitamura H."/>
            <person name="Kitano H."/>
            <person name="Kollias G."/>
            <person name="Krishnan S.P."/>
            <person name="Kruger A."/>
            <person name="Kummerfeld S.K."/>
            <person name="Kurochkin I.V."/>
            <person name="Lareau L.F."/>
            <person name="Lazarevic D."/>
            <person name="Lipovich L."/>
            <person name="Liu J."/>
            <person name="Liuni S."/>
            <person name="McWilliam S."/>
            <person name="Madan Babu M."/>
            <person name="Madera M."/>
            <person name="Marchionni L."/>
            <person name="Matsuda H."/>
            <person name="Matsuzawa S."/>
            <person name="Miki H."/>
            <person name="Mignone F."/>
            <person name="Miyake S."/>
            <person name="Morris K."/>
            <person name="Mottagui-Tabar S."/>
            <person name="Mulder N."/>
            <person name="Nakano N."/>
            <person name="Nakauchi H."/>
            <person name="Ng P."/>
            <person name="Nilsson R."/>
            <person name="Nishiguchi S."/>
            <person name="Nishikawa S."/>
            <person name="Nori F."/>
            <person name="Ohara O."/>
            <person name="Okazaki Y."/>
            <person name="Orlando V."/>
            <person name="Pang K.C."/>
            <person name="Pavan W.J."/>
            <person name="Pavesi G."/>
            <person name="Pesole G."/>
            <person name="Petrovsky N."/>
            <person name="Piazza S."/>
            <person name="Reed J."/>
            <person name="Reid J.F."/>
            <person name="Ring B.Z."/>
            <person name="Ringwald M."/>
            <person name="Rost B."/>
            <person name="Ruan Y."/>
            <person name="Salzberg S.L."/>
            <person name="Sandelin A."/>
            <person name="Schneider C."/>
            <person name="Schoenbach C."/>
            <person name="Sekiguchi K."/>
            <person name="Semple C.A."/>
            <person name="Seno S."/>
            <person name="Sessa L."/>
            <person name="Sheng Y."/>
            <person name="Shibata Y."/>
            <person name="Shimada H."/>
            <person name="Shimada K."/>
            <person name="Silva D."/>
            <person name="Sinclair B."/>
            <person name="Sperling S."/>
            <person name="Stupka E."/>
            <person name="Sugiura K."/>
            <person name="Sultana R."/>
            <person name="Takenaka Y."/>
            <person name="Taki K."/>
            <person name="Tammoja K."/>
            <person name="Tan S.L."/>
            <person name="Tang S."/>
            <person name="Taylor M.S."/>
            <person name="Tegner J."/>
            <person name="Teichmann S.A."/>
            <person name="Ueda H.R."/>
            <person name="van Nimwegen E."/>
            <person name="Verardo R."/>
            <person name="Wei C.L."/>
            <person name="Yagi K."/>
            <person name="Yamanishi H."/>
            <person name="Zabarovsky E."/>
            <person name="Zhu S."/>
            <person name="Zimmer A."/>
            <person name="Hide W."/>
            <person name="Bult C."/>
            <person name="Grimmond S.M."/>
            <person name="Teasdale R.D."/>
            <person name="Liu E.T."/>
            <person name="Brusic V."/>
            <person name="Quackenbush J."/>
            <person name="Wahlestedt C."/>
            <person name="Mattick J.S."/>
            <person name="Hume D.A."/>
            <person name="Kai C."/>
            <person name="Sasaki D."/>
            <person name="Tomaru Y."/>
            <person name="Fukuda S."/>
            <person name="Kanamori-Katayama M."/>
            <person name="Suzuki M."/>
            <person name="Aoki J."/>
            <person name="Arakawa T."/>
            <person name="Iida J."/>
            <person name="Imamura K."/>
            <person name="Itoh M."/>
            <person name="Kato T."/>
            <person name="Kawaji H."/>
            <person name="Kawagashira N."/>
            <person name="Kawashima T."/>
            <person name="Kojima M."/>
            <person name="Kondo S."/>
            <person name="Konno H."/>
            <person name="Nakano K."/>
            <person name="Ninomiya N."/>
            <person name="Nishio T."/>
            <person name="Okada M."/>
            <person name="Plessy C."/>
            <person name="Shibata K."/>
            <person name="Shiraki T."/>
            <person name="Suzuki S."/>
            <person name="Tagami M."/>
            <person name="Waki K."/>
            <person name="Watahiki A."/>
            <person name="Okamura-Oho Y."/>
            <person name="Suzuki H."/>
            <person name="Kawai J."/>
            <person name="Hayashizaki Y."/>
        </authorList>
    </citation>
    <scope>NUCLEOTIDE SEQUENCE [LARGE SCALE MRNA]</scope>
    <source>
        <strain>C57BL/6J</strain>
        <tissue>Bone marrow</tissue>
        <tissue>Small intestine</tissue>
    </source>
</reference>
<reference key="3">
    <citation type="journal article" date="2009" name="PLoS Biol.">
        <title>Lineage-specific biology revealed by a finished genome assembly of the mouse.</title>
        <authorList>
            <person name="Church D.M."/>
            <person name="Goodstadt L."/>
            <person name="Hillier L.W."/>
            <person name="Zody M.C."/>
            <person name="Goldstein S."/>
            <person name="She X."/>
            <person name="Bult C.J."/>
            <person name="Agarwala R."/>
            <person name="Cherry J.L."/>
            <person name="DiCuccio M."/>
            <person name="Hlavina W."/>
            <person name="Kapustin Y."/>
            <person name="Meric P."/>
            <person name="Maglott D."/>
            <person name="Birtle Z."/>
            <person name="Marques A.C."/>
            <person name="Graves T."/>
            <person name="Zhou S."/>
            <person name="Teague B."/>
            <person name="Potamousis K."/>
            <person name="Churas C."/>
            <person name="Place M."/>
            <person name="Herschleb J."/>
            <person name="Runnheim R."/>
            <person name="Forrest D."/>
            <person name="Amos-Landgraf J."/>
            <person name="Schwartz D.C."/>
            <person name="Cheng Z."/>
            <person name="Lindblad-Toh K."/>
            <person name="Eichler E.E."/>
            <person name="Ponting C.P."/>
        </authorList>
    </citation>
    <scope>NUCLEOTIDE SEQUENCE [LARGE SCALE GENOMIC DNA]</scope>
    <source>
        <strain>C57BL/6J</strain>
    </source>
</reference>
<reference key="4">
    <citation type="submission" date="2005-07" db="EMBL/GenBank/DDBJ databases">
        <authorList>
            <person name="Mural R.J."/>
            <person name="Adams M.D."/>
            <person name="Myers E.W."/>
            <person name="Smith H.O."/>
            <person name="Venter J.C."/>
        </authorList>
    </citation>
    <scope>NUCLEOTIDE SEQUENCE [LARGE SCALE GENOMIC DNA]</scope>
</reference>
<reference key="5">
    <citation type="journal article" date="2004" name="Genome Res.">
        <title>The status, quality, and expansion of the NIH full-length cDNA project: the Mammalian Gene Collection (MGC).</title>
        <authorList>
            <consortium name="The MGC Project Team"/>
        </authorList>
    </citation>
    <scope>NUCLEOTIDE SEQUENCE [LARGE SCALE MRNA]</scope>
    <source>
        <strain>FVB/N</strain>
        <tissue>Colon</tissue>
    </source>
</reference>
<reference key="6">
    <citation type="journal article" date="2010" name="Cell">
        <title>A tissue-specific atlas of mouse protein phosphorylation and expression.</title>
        <authorList>
            <person name="Huttlin E.L."/>
            <person name="Jedrychowski M.P."/>
            <person name="Elias J.E."/>
            <person name="Goswami T."/>
            <person name="Rad R."/>
            <person name="Beausoleil S.A."/>
            <person name="Villen J."/>
            <person name="Haas W."/>
            <person name="Sowa M.E."/>
            <person name="Gygi S.P."/>
        </authorList>
    </citation>
    <scope>IDENTIFICATION BY MASS SPECTROMETRY [LARGE SCALE ANALYSIS]</scope>
    <source>
        <tissue>Brain</tissue>
        <tissue>Heart</tissue>
        <tissue>Lung</tissue>
        <tissue>Testis</tissue>
    </source>
</reference>
<reference key="7">
    <citation type="journal article" date="2012" name="Nature">
        <title>Mitochondrial Atpif1 regulates haem synthesis in developing erythroblasts.</title>
        <authorList>
            <person name="Shah D.I."/>
            <person name="Takahashi-Makise N."/>
            <person name="Cooney J.D."/>
            <person name="Li L."/>
            <person name="Schultz I.J."/>
            <person name="Pierce E.L."/>
            <person name="Narla A."/>
            <person name="Seguin A."/>
            <person name="Hattangadi S.M."/>
            <person name="Medlock A.E."/>
            <person name="Langer N.B."/>
            <person name="Dailey T.A."/>
            <person name="Hurst S.N."/>
            <person name="Faccenda D."/>
            <person name="Wiwczar J.M."/>
            <person name="Heggers S.K."/>
            <person name="Vogin G."/>
            <person name="Chen W."/>
            <person name="Chen C."/>
            <person name="Campagna D.R."/>
            <person name="Brugnara C."/>
            <person name="Zhou Y."/>
            <person name="Ebert B.L."/>
            <person name="Danial N.N."/>
            <person name="Fleming M.D."/>
            <person name="Ward D.M."/>
            <person name="Campanella M."/>
            <person name="Dailey H.A."/>
            <person name="Kaplan J."/>
            <person name="Paw B.H."/>
        </authorList>
    </citation>
    <scope>FUNCTION</scope>
</reference>
<reference key="8">
    <citation type="journal article" date="2013" name="Mol. Cell">
        <title>SIRT5-mediated lysine desuccinylation impacts diverse metabolic pathways.</title>
        <authorList>
            <person name="Park J."/>
            <person name="Chen Y."/>
            <person name="Tishkoff D.X."/>
            <person name="Peng C."/>
            <person name="Tan M."/>
            <person name="Dai L."/>
            <person name="Xie Z."/>
            <person name="Zhang Y."/>
            <person name="Zwaans B.M."/>
            <person name="Skinner M.E."/>
            <person name="Lombard D.B."/>
            <person name="Zhao Y."/>
        </authorList>
    </citation>
    <scope>SUCCINYLATION [LARGE SCALE ANALYSIS] AT LYS-103</scope>
    <scope>IDENTIFICATION BY MASS SPECTROMETRY [LARGE SCALE ANALYSIS]</scope>
    <source>
        <tissue>Embryonic fibroblast</tissue>
    </source>
</reference>
<feature type="transit peptide" description="Mitochondrion" evidence="1">
    <location>
        <begin position="1"/>
        <end position="25"/>
    </location>
</feature>
<feature type="chain" id="PRO_0000002548" description="ATPase inhibitor, mitochondrial">
    <location>
        <begin position="26"/>
        <end position="106"/>
    </location>
</feature>
<feature type="region of interest" description="Disordered" evidence="5">
    <location>
        <begin position="26"/>
        <end position="58"/>
    </location>
</feature>
<feature type="region of interest" description="N-terminal inhibitory region" evidence="1">
    <location>
        <begin position="26"/>
        <end position="52"/>
    </location>
</feature>
<feature type="region of interest" description="Antiparallel alpha-helical coiled coil region" evidence="1">
    <location>
        <begin position="74"/>
        <end position="106"/>
    </location>
</feature>
<feature type="coiled-coil region" evidence="4">
    <location>
        <begin position="60"/>
        <end position="106"/>
    </location>
</feature>
<feature type="compositionally biased region" description="Basic and acidic residues" evidence="5">
    <location>
        <begin position="48"/>
        <end position="58"/>
    </location>
</feature>
<feature type="modified residue" description="Phosphoserine" evidence="3">
    <location>
        <position position="39"/>
    </location>
</feature>
<feature type="modified residue" description="N6-succinyllysine" evidence="9">
    <location>
        <position position="103"/>
    </location>
</feature>
<feature type="sequence conflict" description="In Ref. 1; AAB69647." evidence="7" ref="1">
    <original>E</original>
    <variation>D</variation>
    <location>
        <position position="93"/>
    </location>
</feature>
<protein>
    <recommendedName>
        <fullName evidence="7">ATPase inhibitor, mitochondrial</fullName>
    </recommendedName>
    <alternativeName>
        <fullName evidence="3">ATP synthase F1 subunit epsilon</fullName>
    </alternativeName>
    <alternativeName>
        <fullName>Inhibitor of F(1)F(o)-ATPase</fullName>
        <shortName>IF(1)</shortName>
        <shortName>IF1</shortName>
    </alternativeName>
</protein>
<proteinExistence type="evidence at protein level"/>
<organism>
    <name type="scientific">Mus musculus</name>
    <name type="common">Mouse</name>
    <dbReference type="NCBI Taxonomy" id="10090"/>
    <lineage>
        <taxon>Eukaryota</taxon>
        <taxon>Metazoa</taxon>
        <taxon>Chordata</taxon>
        <taxon>Craniata</taxon>
        <taxon>Vertebrata</taxon>
        <taxon>Euteleostomi</taxon>
        <taxon>Mammalia</taxon>
        <taxon>Eutheria</taxon>
        <taxon>Euarchontoglires</taxon>
        <taxon>Glires</taxon>
        <taxon>Rodentia</taxon>
        <taxon>Myomorpha</taxon>
        <taxon>Muroidea</taxon>
        <taxon>Muridae</taxon>
        <taxon>Murinae</taxon>
        <taxon>Mus</taxon>
        <taxon>Mus</taxon>
    </lineage>
</organism>
<keyword id="KW-0175">Coiled coil</keyword>
<keyword id="KW-0496">Mitochondrion</keyword>
<keyword id="KW-0597">Phosphoprotein</keyword>
<keyword id="KW-1185">Reference proteome</keyword>
<keyword id="KW-0809">Transit peptide</keyword>
<accession>O35143</accession>
<accession>Q9D879</accession>
<evidence type="ECO:0000250" key="1"/>
<evidence type="ECO:0000250" key="2">
    <source>
        <dbReference type="UniProtKB" id="P01096"/>
    </source>
</evidence>
<evidence type="ECO:0000250" key="3">
    <source>
        <dbReference type="UniProtKB" id="Q9UII2"/>
    </source>
</evidence>
<evidence type="ECO:0000255" key="4"/>
<evidence type="ECO:0000256" key="5">
    <source>
        <dbReference type="SAM" id="MobiDB-lite"/>
    </source>
</evidence>
<evidence type="ECO:0000269" key="6">
    <source>
    </source>
</evidence>
<evidence type="ECO:0000305" key="7"/>
<evidence type="ECO:0000312" key="8">
    <source>
        <dbReference type="MGI" id="MGI:1196457"/>
    </source>
</evidence>
<evidence type="ECO:0007744" key="9">
    <source>
    </source>
</evidence>
<dbReference type="EMBL" id="AF002718">
    <property type="protein sequence ID" value="AAB69647.1"/>
    <property type="molecule type" value="mRNA"/>
</dbReference>
<dbReference type="EMBL" id="AK008346">
    <property type="protein sequence ID" value="BAB25618.1"/>
    <property type="molecule type" value="mRNA"/>
</dbReference>
<dbReference type="EMBL" id="AK152389">
    <property type="protein sequence ID" value="BAE31177.1"/>
    <property type="molecule type" value="mRNA"/>
</dbReference>
<dbReference type="EMBL" id="AL805897">
    <property type="status" value="NOT_ANNOTATED_CDS"/>
    <property type="molecule type" value="Genomic_DNA"/>
</dbReference>
<dbReference type="EMBL" id="CH466552">
    <property type="protein sequence ID" value="EDL30101.1"/>
    <property type="molecule type" value="Genomic_DNA"/>
</dbReference>
<dbReference type="EMBL" id="BC012680">
    <property type="protein sequence ID" value="AAH12680.1"/>
    <property type="molecule type" value="mRNA"/>
</dbReference>
<dbReference type="CCDS" id="CCDS18727.1"/>
<dbReference type="RefSeq" id="NP_001407692.1">
    <property type="nucleotide sequence ID" value="NM_001420763.1"/>
</dbReference>
<dbReference type="RefSeq" id="NP_001407693.1">
    <property type="nucleotide sequence ID" value="NM_001420764.1"/>
</dbReference>
<dbReference type="RefSeq" id="NP_001407694.1">
    <property type="nucleotide sequence ID" value="NM_001420765.1"/>
</dbReference>
<dbReference type="RefSeq" id="NP_031538.2">
    <property type="nucleotide sequence ID" value="NM_007512.4"/>
</dbReference>
<dbReference type="SMR" id="O35143"/>
<dbReference type="BioGRID" id="198273">
    <property type="interactions" value="32"/>
</dbReference>
<dbReference type="FunCoup" id="O35143">
    <property type="interactions" value="1002"/>
</dbReference>
<dbReference type="IntAct" id="O35143">
    <property type="interactions" value="2"/>
</dbReference>
<dbReference type="MINT" id="O35143"/>
<dbReference type="STRING" id="10090.ENSMUSP00000064282"/>
<dbReference type="iPTMnet" id="O35143"/>
<dbReference type="PhosphoSitePlus" id="O35143"/>
<dbReference type="jPOST" id="O35143"/>
<dbReference type="PaxDb" id="10090-ENSMUSP00000064282"/>
<dbReference type="PeptideAtlas" id="O35143"/>
<dbReference type="ProteomicsDB" id="277128"/>
<dbReference type="Pumba" id="O35143"/>
<dbReference type="TopDownProteomics" id="O35143"/>
<dbReference type="Antibodypedia" id="30912">
    <property type="antibodies" value="235 antibodies from 30 providers"/>
</dbReference>
<dbReference type="DNASU" id="11983"/>
<dbReference type="Ensembl" id="ENSMUST00000067496.7">
    <property type="protein sequence ID" value="ENSMUSP00000064282.7"/>
    <property type="gene ID" value="ENSMUSG00000054428.13"/>
</dbReference>
<dbReference type="GeneID" id="11983"/>
<dbReference type="KEGG" id="mmu:11983"/>
<dbReference type="UCSC" id="uc008vbl.3">
    <property type="organism name" value="mouse"/>
</dbReference>
<dbReference type="AGR" id="MGI:1196457"/>
<dbReference type="CTD" id="93974"/>
<dbReference type="MGI" id="MGI:1196457">
    <property type="gene designation" value="Atp5if1"/>
</dbReference>
<dbReference type="VEuPathDB" id="HostDB:ENSMUSG00000054428"/>
<dbReference type="eggNOG" id="ENOG502S4JP">
    <property type="taxonomic scope" value="Eukaryota"/>
</dbReference>
<dbReference type="GeneTree" id="ENSGT00390000006264"/>
<dbReference type="HOGENOM" id="CLU_147479_0_0_1"/>
<dbReference type="InParanoid" id="O35143"/>
<dbReference type="OMA" id="QEVDHHK"/>
<dbReference type="OrthoDB" id="10045676at2759"/>
<dbReference type="PhylomeDB" id="O35143"/>
<dbReference type="TreeFam" id="TF320659"/>
<dbReference type="BioGRID-ORCS" id="11983">
    <property type="hits" value="7 hits in 62 CRISPR screens"/>
</dbReference>
<dbReference type="ChiTaRS" id="Atpif1">
    <property type="organism name" value="mouse"/>
</dbReference>
<dbReference type="PRO" id="PR:O35143"/>
<dbReference type="Proteomes" id="UP000000589">
    <property type="component" value="Chromosome 4"/>
</dbReference>
<dbReference type="RNAct" id="O35143">
    <property type="molecule type" value="protein"/>
</dbReference>
<dbReference type="Bgee" id="ENSMUSG00000054428">
    <property type="expression patterns" value="Expressed in paneth cell and 280 other cell types or tissues"/>
</dbReference>
<dbReference type="ExpressionAtlas" id="O35143">
    <property type="expression patterns" value="baseline and differential"/>
</dbReference>
<dbReference type="GO" id="GO:0009986">
    <property type="term" value="C:cell surface"/>
    <property type="evidence" value="ECO:0000250"/>
    <property type="project" value="UniProtKB"/>
</dbReference>
<dbReference type="GO" id="GO:0005739">
    <property type="term" value="C:mitochondrion"/>
    <property type="evidence" value="ECO:0007005"/>
    <property type="project" value="MGI"/>
</dbReference>
<dbReference type="GO" id="GO:0032991">
    <property type="term" value="C:protein-containing complex"/>
    <property type="evidence" value="ECO:0000250"/>
    <property type="project" value="UniProtKB"/>
</dbReference>
<dbReference type="GO" id="GO:0043532">
    <property type="term" value="F:angiostatin binding"/>
    <property type="evidence" value="ECO:0000250"/>
    <property type="project" value="UniProtKB"/>
</dbReference>
<dbReference type="GO" id="GO:0051117">
    <property type="term" value="F:ATPase binding"/>
    <property type="evidence" value="ECO:0000250"/>
    <property type="project" value="UniProtKB"/>
</dbReference>
<dbReference type="GO" id="GO:0042030">
    <property type="term" value="F:ATPase inhibitor activity"/>
    <property type="evidence" value="ECO:0000250"/>
    <property type="project" value="UniProtKB"/>
</dbReference>
<dbReference type="GO" id="GO:0005516">
    <property type="term" value="F:calmodulin binding"/>
    <property type="evidence" value="ECO:0000250"/>
    <property type="project" value="UniProtKB"/>
</dbReference>
<dbReference type="GO" id="GO:0042802">
    <property type="term" value="F:identical protein binding"/>
    <property type="evidence" value="ECO:0000250"/>
    <property type="project" value="UniProtKB"/>
</dbReference>
<dbReference type="GO" id="GO:0140260">
    <property type="term" value="F:mitochondrial proton-transporting ATP synthase complex binding"/>
    <property type="evidence" value="ECO:0007669"/>
    <property type="project" value="Ensembl"/>
</dbReference>
<dbReference type="GO" id="GO:0030218">
    <property type="term" value="P:erythrocyte differentiation"/>
    <property type="evidence" value="ECO:0000315"/>
    <property type="project" value="UniProtKB"/>
</dbReference>
<dbReference type="GO" id="GO:0006783">
    <property type="term" value="P:heme biosynthetic process"/>
    <property type="evidence" value="ECO:0000315"/>
    <property type="project" value="UniProtKB"/>
</dbReference>
<dbReference type="GO" id="GO:0051882">
    <property type="term" value="P:mitochondrial depolarization"/>
    <property type="evidence" value="ECO:0007669"/>
    <property type="project" value="Ensembl"/>
</dbReference>
<dbReference type="GO" id="GO:0001937">
    <property type="term" value="P:negative regulation of endothelial cell proliferation"/>
    <property type="evidence" value="ECO:0000250"/>
    <property type="project" value="UniProtKB"/>
</dbReference>
<dbReference type="GO" id="GO:0051346">
    <property type="term" value="P:negative regulation of hydrolase activity"/>
    <property type="evidence" value="ECO:0000250"/>
    <property type="project" value="UniProtKB"/>
</dbReference>
<dbReference type="GO" id="GO:1905707">
    <property type="term" value="P:negative regulation of mitochondrial ATP synthesis coupled proton transport"/>
    <property type="evidence" value="ECO:0000250"/>
    <property type="project" value="UniProtKB"/>
</dbReference>
<dbReference type="GO" id="GO:1901030">
    <property type="term" value="P:positive regulation of mitochondrial outer membrane permeabilization involved in apoptotic signaling pathway"/>
    <property type="evidence" value="ECO:0000315"/>
    <property type="project" value="MGI"/>
</dbReference>
<dbReference type="GO" id="GO:1903052">
    <property type="term" value="P:positive regulation of proteolysis involved in protein catabolic process"/>
    <property type="evidence" value="ECO:0007669"/>
    <property type="project" value="Ensembl"/>
</dbReference>
<dbReference type="GO" id="GO:1905091">
    <property type="term" value="P:positive regulation of type 2 mitophagy"/>
    <property type="evidence" value="ECO:0007669"/>
    <property type="project" value="Ensembl"/>
</dbReference>
<dbReference type="GO" id="GO:0072593">
    <property type="term" value="P:reactive oxygen species metabolic process"/>
    <property type="evidence" value="ECO:0000315"/>
    <property type="project" value="MGI"/>
</dbReference>
<dbReference type="GO" id="GO:1903214">
    <property type="term" value="P:regulation of protein targeting to mitochondrion"/>
    <property type="evidence" value="ECO:0007669"/>
    <property type="project" value="Ensembl"/>
</dbReference>
<dbReference type="FunFam" id="1.20.5.500:FF:000004">
    <property type="entry name" value="ATPase inhibitor A, mitochondrial"/>
    <property type="match status" value="1"/>
</dbReference>
<dbReference type="FunFam" id="1.20.5.500:FF:000003">
    <property type="entry name" value="ATPase inhibitor B, mitochondrial"/>
    <property type="match status" value="1"/>
</dbReference>
<dbReference type="Gene3D" id="1.20.5.500">
    <property type="entry name" value="Single helix bin"/>
    <property type="match status" value="2"/>
</dbReference>
<dbReference type="InterPro" id="IPR007648">
    <property type="entry name" value="ATPase_inhibitor_mt"/>
</dbReference>
<dbReference type="PANTHER" id="PTHR48417">
    <property type="entry name" value="ATP SYNTHASE F1 SUBUNIT EPSILON"/>
    <property type="match status" value="1"/>
</dbReference>
<dbReference type="PANTHER" id="PTHR48417:SF1">
    <property type="entry name" value="ATP SYNTHASE F1 SUBUNIT EPSILON"/>
    <property type="match status" value="1"/>
</dbReference>
<dbReference type="Pfam" id="PF04568">
    <property type="entry name" value="IATP"/>
    <property type="match status" value="1"/>
</dbReference>
<dbReference type="SUPFAM" id="SSF64602">
    <property type="entry name" value="F1 ATPase inhibitor, IF1, C-terminal domain"/>
    <property type="match status" value="1"/>
</dbReference>
<sequence>MAGSALAVRARFGVWGMKVLQTRGFVSDSSDSMDTGAGSIREAGGAFGKREKAEEDRYFREKTKEQLAALRKHHEDEIDHHSKEIERLQKQIERHKKKIQQLKNNH</sequence>
<name>ATIF1_MOUSE</name>
<comment type="function">
    <text evidence="2 6">Endogenous F(1)F(o)-ATPase inhibitor limiting ATP depletion when the mitochondrial membrane potential falls below a threshold and the F(1)F(o)-ATP synthase starts hydrolyzing ATP to pump protons out of the mitochondrial matrix. Required to avoid the consumption of cellular ATP when the F(1)F(o)-ATP synthase enzyme acts as an ATP hydrolase (By similarity). Indirectly acts as a regulator of heme synthesis in erythroid tissues: regulates heme synthesis by modulating the mitochondrial pH and redox potential, allowing FECH to efficiently catalyze the incorporation of iron into protoporphyrin IX to produce heme (PubMed:23135403).</text>
</comment>
<comment type="subunit">
    <text evidence="1">Homodimer; represents the active form and is present at a pH value below 6.5. Homotetramer; represents the inactive form and is present at a pH value above 7.0 (By similarity).</text>
</comment>
<comment type="subcellular location">
    <subcellularLocation>
        <location evidence="1">Mitochondrion</location>
    </subcellularLocation>
</comment>
<comment type="domain">
    <text evidence="1">Forms an alpha-helical dimer with monomers associated via an antiparallel alpha-helical coiled coil composed of residues 74-106, leaving each N-terminal inhibitory region (residues 26-52) accessible for interaction with an F1 catalytic domain. The inhibitory N-terminal region (residues 26-52) binds the alpha(ADP-bound)-beta(ADP-bound) (ATP5F1A-ATP5F1B) interface of F1-ATPase, and also contact the central gamma subunit (ATP5F1C). This dimeric state is favored by pH values below 7.0, and at higher values the dimers associate to form inactive homotetramer, where the inhibitory region is occluded, masking its inhibitory activity (By similarity).</text>
</comment>
<comment type="similarity">
    <text evidence="7">Belongs to the ATPase inhibitor family.</text>
</comment>